<proteinExistence type="inferred from homology"/>
<comment type="function">
    <text evidence="1">NDH-1 shuttles electrons from NADH, via FMN and iron-sulfur (Fe-S) centers, to quinones in the respiratory chain. The immediate electron acceptor for the enzyme in this species is believed to be ubiquinone. Couples the redox reaction to proton translocation (for every two electrons transferred, four hydrogen ions are translocated across the cytoplasmic membrane), and thus conserves the redox energy in a proton gradient.</text>
</comment>
<comment type="catalytic activity">
    <reaction evidence="1">
        <text>a quinone + NADH + 5 H(+)(in) = a quinol + NAD(+) + 4 H(+)(out)</text>
        <dbReference type="Rhea" id="RHEA:57888"/>
        <dbReference type="ChEBI" id="CHEBI:15378"/>
        <dbReference type="ChEBI" id="CHEBI:24646"/>
        <dbReference type="ChEBI" id="CHEBI:57540"/>
        <dbReference type="ChEBI" id="CHEBI:57945"/>
        <dbReference type="ChEBI" id="CHEBI:132124"/>
    </reaction>
</comment>
<comment type="subunit">
    <text evidence="1">NDH-1 is composed of 14 different subunits. Subunits NuoB, C, D, E, F, and G constitute the peripheral sector of the complex.</text>
</comment>
<comment type="subcellular location">
    <subcellularLocation>
        <location evidence="1">Cell inner membrane</location>
        <topology evidence="1">Peripheral membrane protein</topology>
        <orientation evidence="1">Cytoplasmic side</orientation>
    </subcellularLocation>
</comment>
<comment type="similarity">
    <text evidence="1">Belongs to the complex I 30 kDa subunit family.</text>
</comment>
<sequence>MDTQALSDLAAHIEGRMPDAVRSWQIHVGELTLLAERDHIVPLLRFLRDDQQCNFETFIDVCGVDYPERSERFEVVYHLLSMRMNHRIRVRIRTDEETAVPSVVSLWPAANWFEREAFDMYGIQFADHPDLRRILTDYGFEGWPLRKDFPLTGHYEVRYDDLEKRVIYEPVKLAQEYRNFDFLSPWEGMTTVIPGDEKAKEG</sequence>
<feature type="chain" id="PRO_0000358113" description="NADH-quinone oxidoreductase subunit C">
    <location>
        <begin position="1"/>
        <end position="202"/>
    </location>
</feature>
<dbReference type="EC" id="7.1.1.-" evidence="1"/>
<dbReference type="EMBL" id="CP000158">
    <property type="protein sequence ID" value="ABI78040.1"/>
    <property type="molecule type" value="Genomic_DNA"/>
</dbReference>
<dbReference type="RefSeq" id="WP_011646748.1">
    <property type="nucleotide sequence ID" value="NC_008358.1"/>
</dbReference>
<dbReference type="SMR" id="Q0C1E5"/>
<dbReference type="STRING" id="228405.HNE_1744"/>
<dbReference type="KEGG" id="hne:HNE_1744"/>
<dbReference type="eggNOG" id="COG0852">
    <property type="taxonomic scope" value="Bacteria"/>
</dbReference>
<dbReference type="HOGENOM" id="CLU_042628_2_1_5"/>
<dbReference type="Proteomes" id="UP000001959">
    <property type="component" value="Chromosome"/>
</dbReference>
<dbReference type="GO" id="GO:0005886">
    <property type="term" value="C:plasma membrane"/>
    <property type="evidence" value="ECO:0007669"/>
    <property type="project" value="UniProtKB-SubCell"/>
</dbReference>
<dbReference type="GO" id="GO:0008137">
    <property type="term" value="F:NADH dehydrogenase (ubiquinone) activity"/>
    <property type="evidence" value="ECO:0007669"/>
    <property type="project" value="InterPro"/>
</dbReference>
<dbReference type="GO" id="GO:0050136">
    <property type="term" value="F:NADH:ubiquinone reductase (non-electrogenic) activity"/>
    <property type="evidence" value="ECO:0007669"/>
    <property type="project" value="UniProtKB-UniRule"/>
</dbReference>
<dbReference type="GO" id="GO:0048038">
    <property type="term" value="F:quinone binding"/>
    <property type="evidence" value="ECO:0007669"/>
    <property type="project" value="UniProtKB-KW"/>
</dbReference>
<dbReference type="Gene3D" id="3.30.460.80">
    <property type="entry name" value="NADH:ubiquinone oxidoreductase, 30kDa subunit"/>
    <property type="match status" value="1"/>
</dbReference>
<dbReference type="HAMAP" id="MF_01357">
    <property type="entry name" value="NDH1_NuoC"/>
    <property type="match status" value="1"/>
</dbReference>
<dbReference type="InterPro" id="IPR010218">
    <property type="entry name" value="NADH_DH_suC"/>
</dbReference>
<dbReference type="InterPro" id="IPR037232">
    <property type="entry name" value="NADH_quin_OxRdtase_su_C/D-like"/>
</dbReference>
<dbReference type="InterPro" id="IPR001268">
    <property type="entry name" value="NADH_UbQ_OxRdtase_30kDa_su"/>
</dbReference>
<dbReference type="InterPro" id="IPR020396">
    <property type="entry name" value="NADH_UbQ_OxRdtase_CS"/>
</dbReference>
<dbReference type="NCBIfam" id="TIGR01961">
    <property type="entry name" value="NuoC_fam"/>
    <property type="match status" value="1"/>
</dbReference>
<dbReference type="NCBIfam" id="NF004730">
    <property type="entry name" value="PRK06074.1-1"/>
    <property type="match status" value="1"/>
</dbReference>
<dbReference type="NCBIfam" id="NF004733">
    <property type="entry name" value="PRK06074.1-5"/>
    <property type="match status" value="1"/>
</dbReference>
<dbReference type="PANTHER" id="PTHR10884:SF14">
    <property type="entry name" value="NADH DEHYDROGENASE [UBIQUINONE] IRON-SULFUR PROTEIN 3, MITOCHONDRIAL"/>
    <property type="match status" value="1"/>
</dbReference>
<dbReference type="PANTHER" id="PTHR10884">
    <property type="entry name" value="NADH DEHYDROGENASE UBIQUINONE IRON-SULFUR PROTEIN 3"/>
    <property type="match status" value="1"/>
</dbReference>
<dbReference type="Pfam" id="PF00329">
    <property type="entry name" value="Complex1_30kDa"/>
    <property type="match status" value="1"/>
</dbReference>
<dbReference type="SUPFAM" id="SSF143243">
    <property type="entry name" value="Nqo5-like"/>
    <property type="match status" value="1"/>
</dbReference>
<dbReference type="PROSITE" id="PS00542">
    <property type="entry name" value="COMPLEX1_30K"/>
    <property type="match status" value="1"/>
</dbReference>
<protein>
    <recommendedName>
        <fullName evidence="1">NADH-quinone oxidoreductase subunit C</fullName>
        <ecNumber evidence="1">7.1.1.-</ecNumber>
    </recommendedName>
    <alternativeName>
        <fullName evidence="1">NADH dehydrogenase I subunit C</fullName>
    </alternativeName>
    <alternativeName>
        <fullName evidence="1">NDH-1 subunit C</fullName>
    </alternativeName>
</protein>
<gene>
    <name evidence="1" type="primary">nuoC</name>
    <name type="ordered locus">HNE_1744</name>
</gene>
<evidence type="ECO:0000255" key="1">
    <source>
        <dbReference type="HAMAP-Rule" id="MF_01357"/>
    </source>
</evidence>
<accession>Q0C1E5</accession>
<reference key="1">
    <citation type="journal article" date="2006" name="J. Bacteriol.">
        <title>Comparative genomic evidence for a close relationship between the dimorphic prosthecate bacteria Hyphomonas neptunium and Caulobacter crescentus.</title>
        <authorList>
            <person name="Badger J.H."/>
            <person name="Hoover T.R."/>
            <person name="Brun Y.V."/>
            <person name="Weiner R.M."/>
            <person name="Laub M.T."/>
            <person name="Alexandre G."/>
            <person name="Mrazek J."/>
            <person name="Ren Q."/>
            <person name="Paulsen I.T."/>
            <person name="Nelson K.E."/>
            <person name="Khouri H.M."/>
            <person name="Radune D."/>
            <person name="Sosa J."/>
            <person name="Dodson R.J."/>
            <person name="Sullivan S.A."/>
            <person name="Rosovitz M.J."/>
            <person name="Madupu R."/>
            <person name="Brinkac L.M."/>
            <person name="Durkin A.S."/>
            <person name="Daugherty S.C."/>
            <person name="Kothari S.P."/>
            <person name="Giglio M.G."/>
            <person name="Zhou L."/>
            <person name="Haft D.H."/>
            <person name="Selengut J.D."/>
            <person name="Davidsen T.M."/>
            <person name="Yang Q."/>
            <person name="Zafar N."/>
            <person name="Ward N.L."/>
        </authorList>
    </citation>
    <scope>NUCLEOTIDE SEQUENCE [LARGE SCALE GENOMIC DNA]</scope>
    <source>
        <strain>ATCC 15444</strain>
    </source>
</reference>
<name>NUOC_HYPNA</name>
<organism>
    <name type="scientific">Hyphomonas neptunium (strain ATCC 15444)</name>
    <dbReference type="NCBI Taxonomy" id="228405"/>
    <lineage>
        <taxon>Bacteria</taxon>
        <taxon>Pseudomonadati</taxon>
        <taxon>Pseudomonadota</taxon>
        <taxon>Alphaproteobacteria</taxon>
        <taxon>Hyphomonadales</taxon>
        <taxon>Hyphomonadaceae</taxon>
        <taxon>Hyphomonas</taxon>
    </lineage>
</organism>
<keyword id="KW-0997">Cell inner membrane</keyword>
<keyword id="KW-1003">Cell membrane</keyword>
<keyword id="KW-0472">Membrane</keyword>
<keyword id="KW-0520">NAD</keyword>
<keyword id="KW-0874">Quinone</keyword>
<keyword id="KW-1185">Reference proteome</keyword>
<keyword id="KW-1278">Translocase</keyword>
<keyword id="KW-0813">Transport</keyword>
<keyword id="KW-0830">Ubiquinone</keyword>